<accession>O49543</accession>
<dbReference type="EC" id="2.8.1.7" evidence="7"/>
<dbReference type="EMBL" id="AJ243393">
    <property type="protein sequence ID" value="CAB64727.1"/>
    <property type="molecule type" value="mRNA"/>
</dbReference>
<dbReference type="EMBL" id="AF229854">
    <property type="protein sequence ID" value="AAK00758.1"/>
    <property type="molecule type" value="mRNA"/>
</dbReference>
<dbReference type="EMBL" id="AB010075">
    <property type="protein sequence ID" value="BAB10679.1"/>
    <property type="molecule type" value="Genomic_DNA"/>
</dbReference>
<dbReference type="EMBL" id="AL021684">
    <property type="protein sequence ID" value="CAA16686.1"/>
    <property type="molecule type" value="Genomic_DNA"/>
</dbReference>
<dbReference type="EMBL" id="CP002688">
    <property type="protein sequence ID" value="AED98094.1"/>
    <property type="molecule type" value="Genomic_DNA"/>
</dbReference>
<dbReference type="EMBL" id="CP002688">
    <property type="protein sequence ID" value="ANM68565.1"/>
    <property type="molecule type" value="Genomic_DNA"/>
</dbReference>
<dbReference type="EMBL" id="AY050874">
    <property type="protein sequence ID" value="AAK92811.1"/>
    <property type="molecule type" value="mRNA"/>
</dbReference>
<dbReference type="EMBL" id="AY096358">
    <property type="protein sequence ID" value="AAM19999.1"/>
    <property type="molecule type" value="mRNA"/>
</dbReference>
<dbReference type="PIR" id="T05896">
    <property type="entry name" value="T05896"/>
</dbReference>
<dbReference type="RefSeq" id="NP_001318886.1">
    <molecule id="O49543-1"/>
    <property type="nucleotide sequence ID" value="NM_001345717.1"/>
</dbReference>
<dbReference type="RefSeq" id="NP_201373.1">
    <molecule id="O49543-1"/>
    <property type="nucleotide sequence ID" value="NM_125969.3"/>
</dbReference>
<dbReference type="SMR" id="O49543"/>
<dbReference type="BioGRID" id="21943">
    <property type="interactions" value="2"/>
</dbReference>
<dbReference type="FunCoup" id="O49543">
    <property type="interactions" value="3805"/>
</dbReference>
<dbReference type="IntAct" id="O49543">
    <property type="interactions" value="1"/>
</dbReference>
<dbReference type="STRING" id="3702.O49543"/>
<dbReference type="MetOSite" id="O49543"/>
<dbReference type="PaxDb" id="3702-AT5G65720.1"/>
<dbReference type="EnsemblPlants" id="AT5G65720.1">
    <molecule id="O49543-1"/>
    <property type="protein sequence ID" value="AT5G65720.1"/>
    <property type="gene ID" value="AT5G65720"/>
</dbReference>
<dbReference type="EnsemblPlants" id="AT5G65720.3">
    <molecule id="O49543-1"/>
    <property type="protein sequence ID" value="AT5G65720.3"/>
    <property type="gene ID" value="AT5G65720"/>
</dbReference>
<dbReference type="GeneID" id="836701"/>
<dbReference type="Gramene" id="AT5G65720.1">
    <molecule id="O49543-1"/>
    <property type="protein sequence ID" value="AT5G65720.1"/>
    <property type="gene ID" value="AT5G65720"/>
</dbReference>
<dbReference type="Gramene" id="AT5G65720.3">
    <molecule id="O49543-1"/>
    <property type="protein sequence ID" value="AT5G65720.3"/>
    <property type="gene ID" value="AT5G65720"/>
</dbReference>
<dbReference type="KEGG" id="ath:AT5G65720"/>
<dbReference type="Araport" id="AT5G65720"/>
<dbReference type="TAIR" id="AT5G65720">
    <property type="gene designation" value="NFS1"/>
</dbReference>
<dbReference type="eggNOG" id="KOG1549">
    <property type="taxonomic scope" value="Eukaryota"/>
</dbReference>
<dbReference type="HOGENOM" id="CLU_003433_0_2_1"/>
<dbReference type="InParanoid" id="O49543"/>
<dbReference type="OMA" id="CFALEGI"/>
<dbReference type="OrthoDB" id="10250117at2759"/>
<dbReference type="PhylomeDB" id="O49543"/>
<dbReference type="BRENDA" id="2.8.1.6">
    <property type="organism ID" value="399"/>
</dbReference>
<dbReference type="BRENDA" id="2.8.1.7">
    <property type="organism ID" value="399"/>
</dbReference>
<dbReference type="SABIO-RK" id="O49543"/>
<dbReference type="CD-CODE" id="4299E36E">
    <property type="entry name" value="Nucleolus"/>
</dbReference>
<dbReference type="PRO" id="PR:O49543"/>
<dbReference type="Proteomes" id="UP000006548">
    <property type="component" value="Chromosome 5"/>
</dbReference>
<dbReference type="ExpressionAtlas" id="O49543">
    <property type="expression patterns" value="baseline and differential"/>
</dbReference>
<dbReference type="GO" id="GO:0005739">
    <property type="term" value="C:mitochondrion"/>
    <property type="evidence" value="ECO:0007005"/>
    <property type="project" value="TAIR"/>
</dbReference>
<dbReference type="GO" id="GO:0009536">
    <property type="term" value="C:plastid"/>
    <property type="evidence" value="ECO:0007005"/>
    <property type="project" value="TAIR"/>
</dbReference>
<dbReference type="GO" id="GO:0005524">
    <property type="term" value="F:ATP binding"/>
    <property type="evidence" value="ECO:0007005"/>
    <property type="project" value="TAIR"/>
</dbReference>
<dbReference type="GO" id="GO:0031071">
    <property type="term" value="F:cysteine desulfurase activity"/>
    <property type="evidence" value="ECO:0000314"/>
    <property type="project" value="TAIR"/>
</dbReference>
<dbReference type="GO" id="GO:0051536">
    <property type="term" value="F:iron-sulfur cluster binding"/>
    <property type="evidence" value="ECO:0007669"/>
    <property type="project" value="UniProtKB-KW"/>
</dbReference>
<dbReference type="GO" id="GO:0030170">
    <property type="term" value="F:pyridoxal phosphate binding"/>
    <property type="evidence" value="ECO:0007669"/>
    <property type="project" value="InterPro"/>
</dbReference>
<dbReference type="GO" id="GO:0008270">
    <property type="term" value="F:zinc ion binding"/>
    <property type="evidence" value="ECO:0007005"/>
    <property type="project" value="TAIR"/>
</dbReference>
<dbReference type="GO" id="GO:0044571">
    <property type="term" value="P:[2Fe-2S] cluster assembly"/>
    <property type="evidence" value="ECO:0007669"/>
    <property type="project" value="InterPro"/>
</dbReference>
<dbReference type="GO" id="GO:0016226">
    <property type="term" value="P:iron-sulfur cluster assembly"/>
    <property type="evidence" value="ECO:0000314"/>
    <property type="project" value="TAIR"/>
</dbReference>
<dbReference type="FunFam" id="3.40.640.10:FF:000003">
    <property type="entry name" value="Cysteine desulfurase IscS"/>
    <property type="match status" value="1"/>
</dbReference>
<dbReference type="FunFam" id="3.90.1150.10:FF:000002">
    <property type="entry name" value="Cysteine desulfurase IscS"/>
    <property type="match status" value="1"/>
</dbReference>
<dbReference type="Gene3D" id="3.90.1150.10">
    <property type="entry name" value="Aspartate Aminotransferase, domain 1"/>
    <property type="match status" value="1"/>
</dbReference>
<dbReference type="Gene3D" id="3.40.640.10">
    <property type="entry name" value="Type I PLP-dependent aspartate aminotransferase-like (Major domain)"/>
    <property type="match status" value="1"/>
</dbReference>
<dbReference type="HAMAP" id="MF_00331">
    <property type="entry name" value="Cys_desulf_IscS"/>
    <property type="match status" value="1"/>
</dbReference>
<dbReference type="InterPro" id="IPR000192">
    <property type="entry name" value="Aminotrans_V_dom"/>
</dbReference>
<dbReference type="InterPro" id="IPR010240">
    <property type="entry name" value="Cys_deSase_IscS"/>
</dbReference>
<dbReference type="InterPro" id="IPR016454">
    <property type="entry name" value="Cysteine_dSase"/>
</dbReference>
<dbReference type="InterPro" id="IPR015424">
    <property type="entry name" value="PyrdxlP-dep_Trfase"/>
</dbReference>
<dbReference type="InterPro" id="IPR015421">
    <property type="entry name" value="PyrdxlP-dep_Trfase_major"/>
</dbReference>
<dbReference type="InterPro" id="IPR015422">
    <property type="entry name" value="PyrdxlP-dep_Trfase_small"/>
</dbReference>
<dbReference type="NCBIfam" id="TIGR02006">
    <property type="entry name" value="IscS"/>
    <property type="match status" value="1"/>
</dbReference>
<dbReference type="NCBIfam" id="NF010611">
    <property type="entry name" value="PRK14012.1"/>
    <property type="match status" value="1"/>
</dbReference>
<dbReference type="PANTHER" id="PTHR11601:SF34">
    <property type="entry name" value="CYSTEINE DESULFURASE"/>
    <property type="match status" value="1"/>
</dbReference>
<dbReference type="PANTHER" id="PTHR11601">
    <property type="entry name" value="CYSTEINE DESULFURYLASE FAMILY MEMBER"/>
    <property type="match status" value="1"/>
</dbReference>
<dbReference type="Pfam" id="PF00266">
    <property type="entry name" value="Aminotran_5"/>
    <property type="match status" value="1"/>
</dbReference>
<dbReference type="PIRSF" id="PIRSF005572">
    <property type="entry name" value="NifS"/>
    <property type="match status" value="1"/>
</dbReference>
<dbReference type="SUPFAM" id="SSF53383">
    <property type="entry name" value="PLP-dependent transferases"/>
    <property type="match status" value="1"/>
</dbReference>
<proteinExistence type="evidence at protein level"/>
<sequence length="453" mass="50296">MASKVISATIRRTLTKPHGTFSRCRYLSTAAAATEVNYEDESIMMKGVRISGRPLYLDMQATTPIDPRVFDAMNASQIHEYGNPHSRTHLYGWEAENAVENARNQVAKLIEASPKEIVFVSGATEANNMAVKGVMHFYKDTKKHVITTQTEHKCVLDSCRHLQQEGFEVTYLPVKTDGLVDLEMLREAIRPDTGLVSIMAVNNEIGVVQPMEEIGMICKEHNVPFHTDAAQAIGKIPVDVKKWNVALMSMSAHKIYGPKGVGALYVRRRPRIRLEPLMNGGGQERGLRSGTGATQQIVGFGAACELAMKEMEYDEKWIKGLQERLLNGVREKLDGVVVNGSMDSRYVGNLNLSFAYVEGESLLMGLKEVAVSSGSACTSASLEPSYVLRALGVDEDMAHTSIRFGIGRFTTKEEIDKAVELTVKQVEKLREMSPLYEMVKEGIDIKNIQWSQH</sequence>
<organism>
    <name type="scientific">Arabidopsis thaliana</name>
    <name type="common">Mouse-ear cress</name>
    <dbReference type="NCBI Taxonomy" id="3702"/>
    <lineage>
        <taxon>Eukaryota</taxon>
        <taxon>Viridiplantae</taxon>
        <taxon>Streptophyta</taxon>
        <taxon>Embryophyta</taxon>
        <taxon>Tracheophyta</taxon>
        <taxon>Spermatophyta</taxon>
        <taxon>Magnoliopsida</taxon>
        <taxon>eudicotyledons</taxon>
        <taxon>Gunneridae</taxon>
        <taxon>Pentapetalae</taxon>
        <taxon>rosids</taxon>
        <taxon>malvids</taxon>
        <taxon>Brassicales</taxon>
        <taxon>Brassicaceae</taxon>
        <taxon>Camelineae</taxon>
        <taxon>Arabidopsis</taxon>
    </lineage>
</organism>
<name>MNIF1_ARATH</name>
<gene>
    <name evidence="9" type="primary">NIFS1</name>
    <name type="synonym">MtNIFS1</name>
    <name evidence="10" type="synonym">NFS1</name>
    <name evidence="11" type="synonym">NIFS</name>
    <name evidence="13" type="ordered locus">At5g65720</name>
    <name evidence="15" type="ORF">F6H11.150</name>
    <name evidence="14" type="ORF">MPA24.7</name>
</gene>
<protein>
    <recommendedName>
        <fullName evidence="9">Cysteine desulfurase, mitochondrial</fullName>
        <ecNumber evidence="7">2.8.1.7</ecNumber>
    </recommendedName>
    <alternativeName>
        <fullName evidence="11">NIFS homolog 1</fullName>
        <shortName evidence="10">AtNFS1</shortName>
        <shortName evidence="9">AtNIFS1</shortName>
    </alternativeName>
    <alternativeName>
        <fullName>Protein AtMtNifS</fullName>
    </alternativeName>
</protein>
<reference key="1">
    <citation type="submission" date="1999-06" db="EMBL/GenBank/DDBJ databases">
        <title>Isolation and characterization of a nifS-like protein from Arabidopsis thaliana.</title>
        <authorList>
            <person name="Burandt P."/>
            <person name="Schmidt A."/>
            <person name="Papenbrock J."/>
        </authorList>
    </citation>
    <scope>NUCLEOTIDE SEQUENCE [MRNA]</scope>
</reference>
<reference key="2">
    <citation type="submission" date="2000-01" db="EMBL/GenBank/DDBJ databases">
        <title>Cysteine desulfurase from A. thaliana.</title>
        <authorList>
            <person name="Picciocchi A."/>
            <person name="Alban C."/>
        </authorList>
    </citation>
    <scope>NUCLEOTIDE SEQUENCE [MRNA]</scope>
</reference>
<reference key="3">
    <citation type="journal article" date="1998" name="DNA Res.">
        <title>Structural analysis of Arabidopsis thaliana chromosome 5. IV. Sequence features of the regions of 1,456,315 bp covered by nineteen physically assigned P1 and TAC clones.</title>
        <authorList>
            <person name="Sato S."/>
            <person name="Kaneko T."/>
            <person name="Kotani H."/>
            <person name="Nakamura Y."/>
            <person name="Asamizu E."/>
            <person name="Miyajima N."/>
            <person name="Tabata S."/>
        </authorList>
    </citation>
    <scope>NUCLEOTIDE SEQUENCE [LARGE SCALE GENOMIC DNA]</scope>
    <source>
        <strain>cv. Columbia</strain>
    </source>
</reference>
<reference key="4">
    <citation type="journal article" date="2000" name="Nature">
        <title>Sequence and analysis of chromosome 5 of the plant Arabidopsis thaliana.</title>
        <authorList>
            <person name="Tabata S."/>
            <person name="Kaneko T."/>
            <person name="Nakamura Y."/>
            <person name="Kotani H."/>
            <person name="Kato T."/>
            <person name="Asamizu E."/>
            <person name="Miyajima N."/>
            <person name="Sasamoto S."/>
            <person name="Kimura T."/>
            <person name="Hosouchi T."/>
            <person name="Kawashima K."/>
            <person name="Kohara M."/>
            <person name="Matsumoto M."/>
            <person name="Matsuno A."/>
            <person name="Muraki A."/>
            <person name="Nakayama S."/>
            <person name="Nakazaki N."/>
            <person name="Naruo K."/>
            <person name="Okumura S."/>
            <person name="Shinpo S."/>
            <person name="Takeuchi C."/>
            <person name="Wada T."/>
            <person name="Watanabe A."/>
            <person name="Yamada M."/>
            <person name="Yasuda M."/>
            <person name="Sato S."/>
            <person name="de la Bastide M."/>
            <person name="Huang E."/>
            <person name="Spiegel L."/>
            <person name="Gnoj L."/>
            <person name="O'Shaughnessy A."/>
            <person name="Preston R."/>
            <person name="Habermann K."/>
            <person name="Murray J."/>
            <person name="Johnson D."/>
            <person name="Rohlfing T."/>
            <person name="Nelson J."/>
            <person name="Stoneking T."/>
            <person name="Pepin K."/>
            <person name="Spieth J."/>
            <person name="Sekhon M."/>
            <person name="Armstrong J."/>
            <person name="Becker M."/>
            <person name="Belter E."/>
            <person name="Cordum H."/>
            <person name="Cordes M."/>
            <person name="Courtney L."/>
            <person name="Courtney W."/>
            <person name="Dante M."/>
            <person name="Du H."/>
            <person name="Edwards J."/>
            <person name="Fryman J."/>
            <person name="Haakensen B."/>
            <person name="Lamar E."/>
            <person name="Latreille P."/>
            <person name="Leonard S."/>
            <person name="Meyer R."/>
            <person name="Mulvaney E."/>
            <person name="Ozersky P."/>
            <person name="Riley A."/>
            <person name="Strowmatt C."/>
            <person name="Wagner-McPherson C."/>
            <person name="Wollam A."/>
            <person name="Yoakum M."/>
            <person name="Bell M."/>
            <person name="Dedhia N."/>
            <person name="Parnell L."/>
            <person name="Shah R."/>
            <person name="Rodriguez M."/>
            <person name="Hoon See L."/>
            <person name="Vil D."/>
            <person name="Baker J."/>
            <person name="Kirchoff K."/>
            <person name="Toth K."/>
            <person name="King L."/>
            <person name="Bahret A."/>
            <person name="Miller B."/>
            <person name="Marra M.A."/>
            <person name="Martienssen R."/>
            <person name="McCombie W.R."/>
            <person name="Wilson R.K."/>
            <person name="Murphy G."/>
            <person name="Bancroft I."/>
            <person name="Volckaert G."/>
            <person name="Wambutt R."/>
            <person name="Duesterhoeft A."/>
            <person name="Stiekema W."/>
            <person name="Pohl T."/>
            <person name="Entian K.-D."/>
            <person name="Terryn N."/>
            <person name="Hartley N."/>
            <person name="Bent E."/>
            <person name="Johnson S."/>
            <person name="Langham S.-A."/>
            <person name="McCullagh B."/>
            <person name="Robben J."/>
            <person name="Grymonprez B."/>
            <person name="Zimmermann W."/>
            <person name="Ramsperger U."/>
            <person name="Wedler H."/>
            <person name="Balke K."/>
            <person name="Wedler E."/>
            <person name="Peters S."/>
            <person name="van Staveren M."/>
            <person name="Dirkse W."/>
            <person name="Mooijman P."/>
            <person name="Klein Lankhorst R."/>
            <person name="Weitzenegger T."/>
            <person name="Bothe G."/>
            <person name="Rose M."/>
            <person name="Hauf J."/>
            <person name="Berneiser S."/>
            <person name="Hempel S."/>
            <person name="Feldpausch M."/>
            <person name="Lamberth S."/>
            <person name="Villarroel R."/>
            <person name="Gielen J."/>
            <person name="Ardiles W."/>
            <person name="Bents O."/>
            <person name="Lemcke K."/>
            <person name="Kolesov G."/>
            <person name="Mayer K.F.X."/>
            <person name="Rudd S."/>
            <person name="Schoof H."/>
            <person name="Schueller C."/>
            <person name="Zaccaria P."/>
            <person name="Mewes H.-W."/>
            <person name="Bevan M."/>
            <person name="Fransz P.F."/>
        </authorList>
    </citation>
    <scope>NUCLEOTIDE SEQUENCE [LARGE SCALE GENOMIC DNA]</scope>
    <source>
        <strain>cv. Columbia</strain>
    </source>
</reference>
<reference key="5">
    <citation type="journal article" date="2017" name="Plant J.">
        <title>Araport11: a complete reannotation of the Arabidopsis thaliana reference genome.</title>
        <authorList>
            <person name="Cheng C.Y."/>
            <person name="Krishnakumar V."/>
            <person name="Chan A.P."/>
            <person name="Thibaud-Nissen F."/>
            <person name="Schobel S."/>
            <person name="Town C.D."/>
        </authorList>
    </citation>
    <scope>GENOME REANNOTATION</scope>
    <source>
        <strain>cv. Columbia</strain>
    </source>
</reference>
<reference key="6">
    <citation type="journal article" date="2003" name="Science">
        <title>Empirical analysis of transcriptional activity in the Arabidopsis genome.</title>
        <authorList>
            <person name="Yamada K."/>
            <person name="Lim J."/>
            <person name="Dale J.M."/>
            <person name="Chen H."/>
            <person name="Shinn P."/>
            <person name="Palm C.J."/>
            <person name="Southwick A.M."/>
            <person name="Wu H.C."/>
            <person name="Kim C.J."/>
            <person name="Nguyen M."/>
            <person name="Pham P.K."/>
            <person name="Cheuk R.F."/>
            <person name="Karlin-Newmann G."/>
            <person name="Liu S.X."/>
            <person name="Lam B."/>
            <person name="Sakano H."/>
            <person name="Wu T."/>
            <person name="Yu G."/>
            <person name="Miranda M."/>
            <person name="Quach H.L."/>
            <person name="Tripp M."/>
            <person name="Chang C.H."/>
            <person name="Lee J.M."/>
            <person name="Toriumi M.J."/>
            <person name="Chan M.M."/>
            <person name="Tang C.C."/>
            <person name="Onodera C.S."/>
            <person name="Deng J.M."/>
            <person name="Akiyama K."/>
            <person name="Ansari Y."/>
            <person name="Arakawa T."/>
            <person name="Banh J."/>
            <person name="Banno F."/>
            <person name="Bowser L."/>
            <person name="Brooks S.Y."/>
            <person name="Carninci P."/>
            <person name="Chao Q."/>
            <person name="Choy N."/>
            <person name="Enju A."/>
            <person name="Goldsmith A.D."/>
            <person name="Gurjal M."/>
            <person name="Hansen N.F."/>
            <person name="Hayashizaki Y."/>
            <person name="Johnson-Hopson C."/>
            <person name="Hsuan V.W."/>
            <person name="Iida K."/>
            <person name="Karnes M."/>
            <person name="Khan S."/>
            <person name="Koesema E."/>
            <person name="Ishida J."/>
            <person name="Jiang P.X."/>
            <person name="Jones T."/>
            <person name="Kawai J."/>
            <person name="Kamiya A."/>
            <person name="Meyers C."/>
            <person name="Nakajima M."/>
            <person name="Narusaka M."/>
            <person name="Seki M."/>
            <person name="Sakurai T."/>
            <person name="Satou M."/>
            <person name="Tamse R."/>
            <person name="Vaysberg M."/>
            <person name="Wallender E.K."/>
            <person name="Wong C."/>
            <person name="Yamamura Y."/>
            <person name="Yuan S."/>
            <person name="Shinozaki K."/>
            <person name="Davis R.W."/>
            <person name="Theologis A."/>
            <person name="Ecker J.R."/>
        </authorList>
    </citation>
    <scope>NUCLEOTIDE SEQUENCE [LARGE SCALE MRNA]</scope>
    <source>
        <strain>cv. Columbia</strain>
    </source>
</reference>
<reference key="7">
    <citation type="journal article" date="2004" name="Plant Cell">
        <title>Experimental analysis of the Arabidopsis mitochondrial proteome highlights signaling and regulatory components, provides assessment of targeting prediction programs, and indicates plant-specific mitochondrial proteins.</title>
        <authorList>
            <person name="Heazlewood J.L."/>
            <person name="Tonti-Filippini J.S."/>
            <person name="Gout A.M."/>
            <person name="Day D.A."/>
            <person name="Whelan J."/>
            <person name="Millar A.H."/>
        </authorList>
    </citation>
    <scope>IDENTIFICATION BY MASS SPECTROMETRY</scope>
    <scope>SUBCELLULAR LOCATION [LARGE SCALE ANALYSIS]</scope>
    <source>
        <strain>cv. Landsberg erecta</strain>
    </source>
</reference>
<reference key="8">
    <citation type="journal article" date="2006" name="EMBO J.">
        <title>AtSufE is an essential activator of plastidic and mitochondrial desulfurases in Arabidopsis.</title>
        <authorList>
            <person name="Xu X.M."/>
            <person name="Moeller S.G."/>
        </authorList>
    </citation>
    <scope>FUNCTION</scope>
    <scope>INTERACTION WITH SUFE1</scope>
    <scope>ACTIVITY REGULATION</scope>
</reference>
<reference key="9">
    <citation type="journal article" date="2007" name="Plant Mol. Biol.">
        <title>Functional analysis of Arabidopsis genes involved in mitochondrial iron-sulfur cluster assembly.</title>
        <authorList>
            <person name="Frazzon A.P.G."/>
            <person name="Ramirez M.V."/>
            <person name="Warek U."/>
            <person name="Balk J."/>
            <person name="Frazzon J."/>
            <person name="Dean D.R."/>
            <person name="Winkel B.S.J."/>
        </authorList>
    </citation>
    <scope>FUNCTION</scope>
    <scope>CATALYTIC ACTIVITY</scope>
    <scope>BIOPHYSICOCHEMICAL PROPERTIES</scope>
    <scope>SUBCELLULAR LOCATION</scope>
    <scope>DISRUPTION PHENOTYPE</scope>
</reference>
<reference key="10">
    <citation type="journal article" date="2012" name="Mol. Plant">
        <title>Structural and functional studies of the mitochondrial cysteine desulfurase from Arabidopsis thaliana.</title>
        <authorList>
            <person name="Turowski V.R."/>
            <person name="Busi M.V."/>
            <person name="Gomez-Casati D.F."/>
        </authorList>
    </citation>
    <scope>3D-STRUCTURE MODELING</scope>
    <scope>COFACTOR</scope>
    <scope>INTERACTION WITH FH</scope>
    <scope>BIOPHYSICOCHEMICAL PROPERTIES</scope>
    <scope>ACTIVITY REGULATION</scope>
</reference>
<comment type="function">
    <text evidence="6 7">Catalyzes the removal of elemental sulfur from cysteine to produce alanine. Supplies the inorganic sulfur for iron-sulfur (Fe-S) clusters.</text>
</comment>
<comment type="catalytic activity">
    <reaction evidence="7">
        <text>(sulfur carrier)-H + L-cysteine = (sulfur carrier)-SH + L-alanine</text>
        <dbReference type="Rhea" id="RHEA:43892"/>
        <dbReference type="Rhea" id="RHEA-COMP:14737"/>
        <dbReference type="Rhea" id="RHEA-COMP:14739"/>
        <dbReference type="ChEBI" id="CHEBI:29917"/>
        <dbReference type="ChEBI" id="CHEBI:35235"/>
        <dbReference type="ChEBI" id="CHEBI:57972"/>
        <dbReference type="ChEBI" id="CHEBI:64428"/>
        <dbReference type="EC" id="2.8.1.7"/>
    </reaction>
</comment>
<comment type="cofactor">
    <cofactor evidence="8">
        <name>pyridoxal 5'-phosphate</name>
        <dbReference type="ChEBI" id="CHEBI:597326"/>
    </cofactor>
</comment>
<comment type="activity regulation">
    <text evidence="6 8">Threefold increase in the catalytic activity in the presence of FH (frataxin) (PubMed:22511606). 30-fold increase in the catalytic activity in the presence of SUFE1 (PubMed:16437155).</text>
</comment>
<comment type="biophysicochemical properties">
    <kinetics>
        <Vmax evidence="8">21.2 nmol/min/mg enzyme with cysteine as substrate</Vmax>
    </kinetics>
    <phDependence>
        <text evidence="10">Optimum pH is 8.5.</text>
    </phDependence>
</comment>
<comment type="subunit">
    <text evidence="6 8">Interacts with FH (PubMed:22511606). Interacts with SUFE1 (PubMed:16437155).</text>
</comment>
<comment type="subcellular location">
    <subcellularLocation>
        <location evidence="5 7">Mitochondrion</location>
    </subcellularLocation>
</comment>
<comment type="alternative products">
    <event type="alternative splicing"/>
    <isoform>
        <id>O49543-1</id>
        <name>1</name>
        <sequence type="displayed"/>
    </isoform>
    <text>A number of isoforms are produced. According to EST sequences.</text>
</comment>
<comment type="disruption phenotype">
    <text evidence="7">Lethal when homozygous.</text>
</comment>
<comment type="similarity">
    <text evidence="12">Belongs to the class-V pyridoxal-phosphate-dependent aminotransferase family. NifS/IscS subfamily.</text>
</comment>
<evidence type="ECO:0000250" key="1">
    <source>
        <dbReference type="UniProtKB" id="O29689"/>
    </source>
</evidence>
<evidence type="ECO:0000250" key="2">
    <source>
        <dbReference type="UniProtKB" id="P0A6B7"/>
    </source>
</evidence>
<evidence type="ECO:0000250" key="3">
    <source>
        <dbReference type="UniProtKB" id="P0A6B9"/>
    </source>
</evidence>
<evidence type="ECO:0000255" key="4"/>
<evidence type="ECO:0000269" key="5">
    <source>
    </source>
</evidence>
<evidence type="ECO:0000269" key="6">
    <source>
    </source>
</evidence>
<evidence type="ECO:0000269" key="7">
    <source>
    </source>
</evidence>
<evidence type="ECO:0000269" key="8">
    <source>
    </source>
</evidence>
<evidence type="ECO:0000303" key="9">
    <source>
    </source>
</evidence>
<evidence type="ECO:0000303" key="10">
    <source>
    </source>
</evidence>
<evidence type="ECO:0000303" key="11">
    <source ref="1"/>
</evidence>
<evidence type="ECO:0000305" key="12"/>
<evidence type="ECO:0000312" key="13">
    <source>
        <dbReference type="Araport" id="AT5G65720"/>
    </source>
</evidence>
<evidence type="ECO:0000312" key="14">
    <source>
        <dbReference type="EMBL" id="BAB10679.1"/>
    </source>
</evidence>
<evidence type="ECO:0000312" key="15">
    <source>
        <dbReference type="EMBL" id="CAA16686.1"/>
    </source>
</evidence>
<feature type="transit peptide" description="Mitochondrion" evidence="4">
    <location>
        <begin position="1"/>
        <end position="34"/>
    </location>
</feature>
<feature type="chain" id="PRO_0000001299" description="Cysteine desulfurase, mitochondrial">
    <location>
        <begin position="35"/>
        <end position="453"/>
    </location>
</feature>
<feature type="active site" description="Cysteine persulfide intermediate" evidence="2">
    <location>
        <position position="377"/>
    </location>
</feature>
<feature type="binding site" evidence="3">
    <location>
        <begin position="123"/>
        <end position="124"/>
    </location>
    <ligand>
        <name>pyridoxal 5'-phosphate</name>
        <dbReference type="ChEBI" id="CHEBI:597326"/>
    </ligand>
</feature>
<feature type="binding site" evidence="1">
    <location>
        <position position="203"/>
    </location>
    <ligand>
        <name>pyridoxal 5'-phosphate</name>
        <dbReference type="ChEBI" id="CHEBI:597326"/>
    </ligand>
</feature>
<feature type="binding site" evidence="3">
    <location>
        <position position="231"/>
    </location>
    <ligand>
        <name>pyridoxal 5'-phosphate</name>
        <dbReference type="ChEBI" id="CHEBI:597326"/>
    </ligand>
</feature>
<feature type="binding site" evidence="3">
    <location>
        <begin position="251"/>
        <end position="253"/>
    </location>
    <ligand>
        <name>pyridoxal 5'-phosphate</name>
        <dbReference type="ChEBI" id="CHEBI:597326"/>
    </ligand>
</feature>
<feature type="binding site" evidence="3">
    <location>
        <position position="291"/>
    </location>
    <ligand>
        <name>pyridoxal 5'-phosphate</name>
        <dbReference type="ChEBI" id="CHEBI:597326"/>
    </ligand>
</feature>
<feature type="binding site" description="via persulfide group" evidence="1">
    <location>
        <position position="377"/>
    </location>
    <ligand>
        <name>[2Fe-2S] cluster</name>
        <dbReference type="ChEBI" id="CHEBI:190135"/>
    </ligand>
</feature>
<feature type="modified residue" description="N6-(pyridoxal phosphate)lysine" evidence="3">
    <location>
        <position position="254"/>
    </location>
</feature>
<keyword id="KW-0025">Alternative splicing</keyword>
<keyword id="KW-0408">Iron</keyword>
<keyword id="KW-0411">Iron-sulfur</keyword>
<keyword id="KW-0479">Metal-binding</keyword>
<keyword id="KW-0496">Mitochondrion</keyword>
<keyword id="KW-0663">Pyridoxal phosphate</keyword>
<keyword id="KW-1185">Reference proteome</keyword>
<keyword id="KW-0808">Transferase</keyword>
<keyword id="KW-0809">Transit peptide</keyword>